<reference key="1">
    <citation type="submission" date="2000-01" db="EMBL/GenBank/DDBJ databases">
        <title>Human heparan sulfate 2-O-sulfotransferase.</title>
        <authorList>
            <person name="Habuchi H."/>
        </authorList>
    </citation>
    <scope>NUCLEOTIDE SEQUENCE [MRNA] (ISOFORM 1)</scope>
</reference>
<reference key="2">
    <citation type="journal article" date="1997" name="DNA Res.">
        <title>Characterization of cDNA clones in size-fractionated cDNA libraries from human brain.</title>
        <authorList>
            <person name="Seki N."/>
            <person name="Ohira M."/>
            <person name="Nagase T."/>
            <person name="Ishikawa K."/>
            <person name="Miyajima N."/>
            <person name="Nakajima D."/>
            <person name="Nomura N."/>
            <person name="Ohara O."/>
        </authorList>
    </citation>
    <scope>NUCLEOTIDE SEQUENCE [LARGE SCALE MRNA] (ISOFORM 1)</scope>
    <source>
        <tissue>Brain</tissue>
    </source>
</reference>
<reference key="3">
    <citation type="journal article" date="2004" name="Nat. Genet.">
        <title>Complete sequencing and characterization of 21,243 full-length human cDNAs.</title>
        <authorList>
            <person name="Ota T."/>
            <person name="Suzuki Y."/>
            <person name="Nishikawa T."/>
            <person name="Otsuki T."/>
            <person name="Sugiyama T."/>
            <person name="Irie R."/>
            <person name="Wakamatsu A."/>
            <person name="Hayashi K."/>
            <person name="Sato H."/>
            <person name="Nagai K."/>
            <person name="Kimura K."/>
            <person name="Makita H."/>
            <person name="Sekine M."/>
            <person name="Obayashi M."/>
            <person name="Nishi T."/>
            <person name="Shibahara T."/>
            <person name="Tanaka T."/>
            <person name="Ishii S."/>
            <person name="Yamamoto J."/>
            <person name="Saito K."/>
            <person name="Kawai Y."/>
            <person name="Isono Y."/>
            <person name="Nakamura Y."/>
            <person name="Nagahari K."/>
            <person name="Murakami K."/>
            <person name="Yasuda T."/>
            <person name="Iwayanagi T."/>
            <person name="Wagatsuma M."/>
            <person name="Shiratori A."/>
            <person name="Sudo H."/>
            <person name="Hosoiri T."/>
            <person name="Kaku Y."/>
            <person name="Kodaira H."/>
            <person name="Kondo H."/>
            <person name="Sugawara M."/>
            <person name="Takahashi M."/>
            <person name="Kanda K."/>
            <person name="Yokoi T."/>
            <person name="Furuya T."/>
            <person name="Kikkawa E."/>
            <person name="Omura Y."/>
            <person name="Abe K."/>
            <person name="Kamihara K."/>
            <person name="Katsuta N."/>
            <person name="Sato K."/>
            <person name="Tanikawa M."/>
            <person name="Yamazaki M."/>
            <person name="Ninomiya K."/>
            <person name="Ishibashi T."/>
            <person name="Yamashita H."/>
            <person name="Murakawa K."/>
            <person name="Fujimori K."/>
            <person name="Tanai H."/>
            <person name="Kimata M."/>
            <person name="Watanabe M."/>
            <person name="Hiraoka S."/>
            <person name="Chiba Y."/>
            <person name="Ishida S."/>
            <person name="Ono Y."/>
            <person name="Takiguchi S."/>
            <person name="Watanabe S."/>
            <person name="Yosida M."/>
            <person name="Hotuta T."/>
            <person name="Kusano J."/>
            <person name="Kanehori K."/>
            <person name="Takahashi-Fujii A."/>
            <person name="Hara H."/>
            <person name="Tanase T.-O."/>
            <person name="Nomura Y."/>
            <person name="Togiya S."/>
            <person name="Komai F."/>
            <person name="Hara R."/>
            <person name="Takeuchi K."/>
            <person name="Arita M."/>
            <person name="Imose N."/>
            <person name="Musashino K."/>
            <person name="Yuuki H."/>
            <person name="Oshima A."/>
            <person name="Sasaki N."/>
            <person name="Aotsuka S."/>
            <person name="Yoshikawa Y."/>
            <person name="Matsunawa H."/>
            <person name="Ichihara T."/>
            <person name="Shiohata N."/>
            <person name="Sano S."/>
            <person name="Moriya S."/>
            <person name="Momiyama H."/>
            <person name="Satoh N."/>
            <person name="Takami S."/>
            <person name="Terashima Y."/>
            <person name="Suzuki O."/>
            <person name="Nakagawa S."/>
            <person name="Senoh A."/>
            <person name="Mizoguchi H."/>
            <person name="Goto Y."/>
            <person name="Shimizu F."/>
            <person name="Wakebe H."/>
            <person name="Hishigaki H."/>
            <person name="Watanabe T."/>
            <person name="Sugiyama A."/>
            <person name="Takemoto M."/>
            <person name="Kawakami B."/>
            <person name="Yamazaki M."/>
            <person name="Watanabe K."/>
            <person name="Kumagai A."/>
            <person name="Itakura S."/>
            <person name="Fukuzumi Y."/>
            <person name="Fujimori Y."/>
            <person name="Komiyama M."/>
            <person name="Tashiro H."/>
            <person name="Tanigami A."/>
            <person name="Fujiwara T."/>
            <person name="Ono T."/>
            <person name="Yamada K."/>
            <person name="Fujii Y."/>
            <person name="Ozaki K."/>
            <person name="Hirao M."/>
            <person name="Ohmori Y."/>
            <person name="Kawabata A."/>
            <person name="Hikiji T."/>
            <person name="Kobatake N."/>
            <person name="Inagaki H."/>
            <person name="Ikema Y."/>
            <person name="Okamoto S."/>
            <person name="Okitani R."/>
            <person name="Kawakami T."/>
            <person name="Noguchi S."/>
            <person name="Itoh T."/>
            <person name="Shigeta K."/>
            <person name="Senba T."/>
            <person name="Matsumura K."/>
            <person name="Nakajima Y."/>
            <person name="Mizuno T."/>
            <person name="Morinaga M."/>
            <person name="Sasaki M."/>
            <person name="Togashi T."/>
            <person name="Oyama M."/>
            <person name="Hata H."/>
            <person name="Watanabe M."/>
            <person name="Komatsu T."/>
            <person name="Mizushima-Sugano J."/>
            <person name="Satoh T."/>
            <person name="Shirai Y."/>
            <person name="Takahashi Y."/>
            <person name="Nakagawa K."/>
            <person name="Okumura K."/>
            <person name="Nagase T."/>
            <person name="Nomura N."/>
            <person name="Kikuchi H."/>
            <person name="Masuho Y."/>
            <person name="Yamashita R."/>
            <person name="Nakai K."/>
            <person name="Yada T."/>
            <person name="Nakamura Y."/>
            <person name="Ohara O."/>
            <person name="Isogai T."/>
            <person name="Sugano S."/>
        </authorList>
    </citation>
    <scope>NUCLEOTIDE SEQUENCE [LARGE SCALE MRNA] (ISOFORM 2)</scope>
    <source>
        <tissue>Placenta</tissue>
    </source>
</reference>
<reference key="4">
    <citation type="journal article" date="2006" name="Nature">
        <title>The DNA sequence and biological annotation of human chromosome 1.</title>
        <authorList>
            <person name="Gregory S.G."/>
            <person name="Barlow K.F."/>
            <person name="McLay K.E."/>
            <person name="Kaul R."/>
            <person name="Swarbreck D."/>
            <person name="Dunham A."/>
            <person name="Scott C.E."/>
            <person name="Howe K.L."/>
            <person name="Woodfine K."/>
            <person name="Spencer C.C.A."/>
            <person name="Jones M.C."/>
            <person name="Gillson C."/>
            <person name="Searle S."/>
            <person name="Zhou Y."/>
            <person name="Kokocinski F."/>
            <person name="McDonald L."/>
            <person name="Evans R."/>
            <person name="Phillips K."/>
            <person name="Atkinson A."/>
            <person name="Cooper R."/>
            <person name="Jones C."/>
            <person name="Hall R.E."/>
            <person name="Andrews T.D."/>
            <person name="Lloyd C."/>
            <person name="Ainscough R."/>
            <person name="Almeida J.P."/>
            <person name="Ambrose K.D."/>
            <person name="Anderson F."/>
            <person name="Andrew R.W."/>
            <person name="Ashwell R.I.S."/>
            <person name="Aubin K."/>
            <person name="Babbage A.K."/>
            <person name="Bagguley C.L."/>
            <person name="Bailey J."/>
            <person name="Beasley H."/>
            <person name="Bethel G."/>
            <person name="Bird C.P."/>
            <person name="Bray-Allen S."/>
            <person name="Brown J.Y."/>
            <person name="Brown A.J."/>
            <person name="Buckley D."/>
            <person name="Burton J."/>
            <person name="Bye J."/>
            <person name="Carder C."/>
            <person name="Chapman J.C."/>
            <person name="Clark S.Y."/>
            <person name="Clarke G."/>
            <person name="Clee C."/>
            <person name="Cobley V."/>
            <person name="Collier R.E."/>
            <person name="Corby N."/>
            <person name="Coville G.J."/>
            <person name="Davies J."/>
            <person name="Deadman R."/>
            <person name="Dunn M."/>
            <person name="Earthrowl M."/>
            <person name="Ellington A.G."/>
            <person name="Errington H."/>
            <person name="Frankish A."/>
            <person name="Frankland J."/>
            <person name="French L."/>
            <person name="Garner P."/>
            <person name="Garnett J."/>
            <person name="Gay L."/>
            <person name="Ghori M.R.J."/>
            <person name="Gibson R."/>
            <person name="Gilby L.M."/>
            <person name="Gillett W."/>
            <person name="Glithero R.J."/>
            <person name="Grafham D.V."/>
            <person name="Griffiths C."/>
            <person name="Griffiths-Jones S."/>
            <person name="Grocock R."/>
            <person name="Hammond S."/>
            <person name="Harrison E.S.I."/>
            <person name="Hart E."/>
            <person name="Haugen E."/>
            <person name="Heath P.D."/>
            <person name="Holmes S."/>
            <person name="Holt K."/>
            <person name="Howden P.J."/>
            <person name="Hunt A.R."/>
            <person name="Hunt S.E."/>
            <person name="Hunter G."/>
            <person name="Isherwood J."/>
            <person name="James R."/>
            <person name="Johnson C."/>
            <person name="Johnson D."/>
            <person name="Joy A."/>
            <person name="Kay M."/>
            <person name="Kershaw J.K."/>
            <person name="Kibukawa M."/>
            <person name="Kimberley A.M."/>
            <person name="King A."/>
            <person name="Knights A.J."/>
            <person name="Lad H."/>
            <person name="Laird G."/>
            <person name="Lawlor S."/>
            <person name="Leongamornlert D.A."/>
            <person name="Lloyd D.M."/>
            <person name="Loveland J."/>
            <person name="Lovell J."/>
            <person name="Lush M.J."/>
            <person name="Lyne R."/>
            <person name="Martin S."/>
            <person name="Mashreghi-Mohammadi M."/>
            <person name="Matthews L."/>
            <person name="Matthews N.S.W."/>
            <person name="McLaren S."/>
            <person name="Milne S."/>
            <person name="Mistry S."/>
            <person name="Moore M.J.F."/>
            <person name="Nickerson T."/>
            <person name="O'Dell C.N."/>
            <person name="Oliver K."/>
            <person name="Palmeiri A."/>
            <person name="Palmer S.A."/>
            <person name="Parker A."/>
            <person name="Patel D."/>
            <person name="Pearce A.V."/>
            <person name="Peck A.I."/>
            <person name="Pelan S."/>
            <person name="Phelps K."/>
            <person name="Phillimore B.J."/>
            <person name="Plumb R."/>
            <person name="Rajan J."/>
            <person name="Raymond C."/>
            <person name="Rouse G."/>
            <person name="Saenphimmachak C."/>
            <person name="Sehra H.K."/>
            <person name="Sheridan E."/>
            <person name="Shownkeen R."/>
            <person name="Sims S."/>
            <person name="Skuce C.D."/>
            <person name="Smith M."/>
            <person name="Steward C."/>
            <person name="Subramanian S."/>
            <person name="Sycamore N."/>
            <person name="Tracey A."/>
            <person name="Tromans A."/>
            <person name="Van Helmond Z."/>
            <person name="Wall M."/>
            <person name="Wallis J.M."/>
            <person name="White S."/>
            <person name="Whitehead S.L."/>
            <person name="Wilkinson J.E."/>
            <person name="Willey D.L."/>
            <person name="Williams H."/>
            <person name="Wilming L."/>
            <person name="Wray P.W."/>
            <person name="Wu Z."/>
            <person name="Coulson A."/>
            <person name="Vaudin M."/>
            <person name="Sulston J.E."/>
            <person name="Durbin R.M."/>
            <person name="Hubbard T."/>
            <person name="Wooster R."/>
            <person name="Dunham I."/>
            <person name="Carter N.P."/>
            <person name="McVean G."/>
            <person name="Ross M.T."/>
            <person name="Harrow J."/>
            <person name="Olson M.V."/>
            <person name="Beck S."/>
            <person name="Rogers J."/>
            <person name="Bentley D.R."/>
        </authorList>
    </citation>
    <scope>NUCLEOTIDE SEQUENCE [LARGE SCALE GENOMIC DNA]</scope>
</reference>
<reference key="5">
    <citation type="submission" date="2005-09" db="EMBL/GenBank/DDBJ databases">
        <authorList>
            <person name="Mural R.J."/>
            <person name="Istrail S."/>
            <person name="Sutton G.G."/>
            <person name="Florea L."/>
            <person name="Halpern A.L."/>
            <person name="Mobarry C.M."/>
            <person name="Lippert R."/>
            <person name="Walenz B."/>
            <person name="Shatkay H."/>
            <person name="Dew I."/>
            <person name="Miller J.R."/>
            <person name="Flanigan M.J."/>
            <person name="Edwards N.J."/>
            <person name="Bolanos R."/>
            <person name="Fasulo D."/>
            <person name="Halldorsson B.V."/>
            <person name="Hannenhalli S."/>
            <person name="Turner R."/>
            <person name="Yooseph S."/>
            <person name="Lu F."/>
            <person name="Nusskern D.R."/>
            <person name="Shue B.C."/>
            <person name="Zheng X.H."/>
            <person name="Zhong F."/>
            <person name="Delcher A.L."/>
            <person name="Huson D.H."/>
            <person name="Kravitz S.A."/>
            <person name="Mouchard L."/>
            <person name="Reinert K."/>
            <person name="Remington K.A."/>
            <person name="Clark A.G."/>
            <person name="Waterman M.S."/>
            <person name="Eichler E.E."/>
            <person name="Adams M.D."/>
            <person name="Hunkapiller M.W."/>
            <person name="Myers E.W."/>
            <person name="Venter J.C."/>
        </authorList>
    </citation>
    <scope>NUCLEOTIDE SEQUENCE [LARGE SCALE GENOMIC DNA]</scope>
</reference>
<reference key="6">
    <citation type="journal article" date="2004" name="Genome Res.">
        <title>The status, quality, and expansion of the NIH full-length cDNA project: the Mammalian Gene Collection (MGC).</title>
        <authorList>
            <consortium name="The MGC Project Team"/>
        </authorList>
    </citation>
    <scope>NUCLEOTIDE SEQUENCE [LARGE SCALE MRNA] (ISOFORM 3)</scope>
    <source>
        <tissue>Brain</tissue>
        <tissue>Ovary</tissue>
        <tissue>Testis</tissue>
    </source>
</reference>
<reference key="7">
    <citation type="journal article" date="2011" name="BMC Syst. Biol.">
        <title>Initial characterization of the human central proteome.</title>
        <authorList>
            <person name="Burkard T.R."/>
            <person name="Planyavsky M."/>
            <person name="Kaupe I."/>
            <person name="Breitwieser F.P."/>
            <person name="Buerckstuemmer T."/>
            <person name="Bennett K.L."/>
            <person name="Superti-Furga G."/>
            <person name="Colinge J."/>
        </authorList>
    </citation>
    <scope>IDENTIFICATION BY MASS SPECTROMETRY [LARGE SCALE ANALYSIS]</scope>
</reference>
<reference key="8">
    <citation type="journal article" date="2020" name="Am. J. Hum. Genet.">
        <title>Bi-allelic pathogenic variants in HS2ST1 cause a syndrome characterized by developmental delay and corpus callosum, skeletal, and renal abnormalities.</title>
        <authorList>
            <person name="Schneeberger P.E."/>
            <person name="von Elsner L."/>
            <person name="Barker E.L."/>
            <person name="Meinecke P."/>
            <person name="Marquardt I."/>
            <person name="Alawi M."/>
            <person name="Steindl K."/>
            <person name="Joset P."/>
            <person name="Rauch A."/>
            <person name="Zwijnenburg P.J.G."/>
            <person name="Weiss M.M."/>
            <person name="Merry C.L.R."/>
            <person name="Kutsche K."/>
        </authorList>
    </citation>
    <scope>INVOLVEMENT IN NFSRA</scope>
    <scope>VARIANTS NFSRA TYR-165; SER-176 AND SER-189</scope>
</reference>
<feature type="chain" id="PRO_0000207674" description="Heparan sulfate 2-O-sulfotransferase 1">
    <location>
        <begin position="1"/>
        <end position="356"/>
    </location>
</feature>
<feature type="topological domain" description="Cytoplasmic" evidence="5">
    <location>
        <begin position="1"/>
        <end position="11"/>
    </location>
</feature>
<feature type="transmembrane region" description="Helical; Signal-anchor for type II membrane protein" evidence="5">
    <location>
        <begin position="12"/>
        <end position="28"/>
    </location>
</feature>
<feature type="topological domain" description="Lumenal" evidence="5">
    <location>
        <begin position="29"/>
        <end position="356"/>
    </location>
</feature>
<feature type="coiled-coil region" evidence="5">
    <location>
        <begin position="24"/>
        <end position="51"/>
    </location>
</feature>
<feature type="active site" evidence="3">
    <location>
        <position position="140"/>
    </location>
</feature>
<feature type="active site" evidence="1">
    <location>
        <position position="142"/>
    </location>
</feature>
<feature type="binding site" evidence="3">
    <location>
        <position position="83"/>
    </location>
    <ligand>
        <name>adenosine 3',5'-bisphosphate</name>
        <dbReference type="ChEBI" id="CHEBI:58343"/>
    </ligand>
</feature>
<feature type="binding site" evidence="3">
    <location>
        <position position="84"/>
    </location>
    <ligand>
        <name>adenosine 3',5'-bisphosphate</name>
        <dbReference type="ChEBI" id="CHEBI:58343"/>
    </ligand>
</feature>
<feature type="binding site" evidence="3">
    <location>
        <position position="85"/>
    </location>
    <ligand>
        <name>adenosine 3',5'-bisphosphate</name>
        <dbReference type="ChEBI" id="CHEBI:58343"/>
    </ligand>
</feature>
<feature type="binding site" evidence="3">
    <location>
        <position position="86"/>
    </location>
    <ligand>
        <name>adenosine 3',5'-bisphosphate</name>
        <dbReference type="ChEBI" id="CHEBI:58343"/>
    </ligand>
</feature>
<feature type="binding site" evidence="3">
    <location>
        <position position="87"/>
    </location>
    <ligand>
        <name>adenosine 3',5'-bisphosphate</name>
        <dbReference type="ChEBI" id="CHEBI:58343"/>
    </ligand>
</feature>
<feature type="binding site" evidence="3">
    <location>
        <position position="88"/>
    </location>
    <ligand>
        <name>adenosine 3',5'-bisphosphate</name>
        <dbReference type="ChEBI" id="CHEBI:58343"/>
    </ligand>
</feature>
<feature type="binding site" evidence="3">
    <location>
        <position position="164"/>
    </location>
    <ligand>
        <name>adenosine 3',5'-bisphosphate</name>
        <dbReference type="ChEBI" id="CHEBI:58343"/>
    </ligand>
</feature>
<feature type="binding site" evidence="3">
    <location>
        <position position="172"/>
    </location>
    <ligand>
        <name>adenosine 3',5'-bisphosphate</name>
        <dbReference type="ChEBI" id="CHEBI:58343"/>
    </ligand>
</feature>
<feature type="binding site" evidence="3">
    <location>
        <position position="279"/>
    </location>
    <ligand>
        <name>adenosine 3',5'-bisphosphate</name>
        <dbReference type="ChEBI" id="CHEBI:58343"/>
    </ligand>
</feature>
<feature type="binding site" evidence="3">
    <location>
        <position position="285"/>
    </location>
    <ligand>
        <name>adenosine 3',5'-bisphosphate</name>
        <dbReference type="ChEBI" id="CHEBI:58343"/>
    </ligand>
</feature>
<feature type="binding site" evidence="3">
    <location>
        <position position="290"/>
    </location>
    <ligand>
        <name>adenosine 3',5'-bisphosphate</name>
        <dbReference type="ChEBI" id="CHEBI:58343"/>
    </ligand>
</feature>
<feature type="binding site" evidence="3">
    <location>
        <position position="293"/>
    </location>
    <ligand>
        <name>adenosine 3',5'-bisphosphate</name>
        <dbReference type="ChEBI" id="CHEBI:58343"/>
    </ligand>
</feature>
<feature type="glycosylation site" description="N-linked (GlcNAc...) asparagine" evidence="5">
    <location>
        <position position="108"/>
    </location>
</feature>
<feature type="glycosylation site" description="N-linked (GlcNAc...) asparagine" evidence="5">
    <location>
        <position position="127"/>
    </location>
</feature>
<feature type="disulfide bond" evidence="3">
    <location>
        <begin position="201"/>
        <end position="209"/>
    </location>
</feature>
<feature type="disulfide bond" evidence="3">
    <location>
        <begin position="222"/>
        <end position="228"/>
    </location>
</feature>
<feature type="splice variant" id="VSP_014062" description="In isoform 2." evidence="7">
    <original>MGLLRIMMPPKLQLLAVVAFAVAMLFLENQIQKLEESRSKL</original>
    <variation>MLFIKFIHLEVFSMP</variation>
    <location>
        <begin position="1"/>
        <end position="41"/>
    </location>
</feature>
<feature type="splice variant" id="VSP_014063" description="In isoform 3." evidence="8">
    <location>
        <begin position="230"/>
        <end position="356"/>
    </location>
</feature>
<feature type="splice variant" id="VSP_014064" description="In isoform 2." evidence="7">
    <original>GKKSHLRKTTEKKLPTKQTIAKLQQSDIWKMENEFYEFALEQFQFIRAHAVREKDGDLYILAQNFFYEKIYPKSN</original>
    <variation>APDTATPSHRHGPICGSKSISSLLVKVSPVCKDSHCLGKCSRNGLSAV</variation>
    <location>
        <begin position="282"/>
        <end position="356"/>
    </location>
</feature>
<feature type="sequence variant" id="VAR_085252" description="In NFSRA; dbSNP:rs758990524." evidence="6">
    <original>D</original>
    <variation>Y</variation>
    <location>
        <position position="165"/>
    </location>
</feature>
<feature type="sequence variant" id="VAR_085253" description="In NFSRA; dbSNP:rs1651972168." evidence="6">
    <original>F</original>
    <variation>S</variation>
    <location>
        <position position="176"/>
    </location>
</feature>
<feature type="sequence variant" id="VAR_085254" description="In NFSRA; dbSNP:rs1651973144." evidence="6">
    <original>R</original>
    <variation>S</variation>
    <location>
        <position position="189"/>
    </location>
</feature>
<comment type="function">
    <text evidence="3 4">Catalyzes the transfer of a sulfo group from 3'-phospho-5'-adenylyl sulfate (PAPS) to the 2-OH position of iduronic acid (IdoA) or glucuronic acid (GlcA) within the heparan sulfate (HS) chain and participates in HS biosynthesis (By similarity). Required for metanephric development of kidney formation, suggesting that 2-O-sulfation within HS is essential for signaling between ureteric bud and metanephric mesenchyme (By similarity).</text>
</comment>
<comment type="subunit">
    <text evidence="3 4">Homotrimer (By similarity). Interacts with the C5-epimerase GLCE (By similarity).</text>
</comment>
<comment type="interaction">
    <interactant intactId="EBI-25887463">
        <id>Q7LGA3-3</id>
    </interactant>
    <interactant intactId="EBI-25913156">
        <id>O14908-2</id>
        <label>GIPC1</label>
    </interactant>
    <organismsDiffer>false</organismsDiffer>
    <experiments>3</experiments>
</comment>
<comment type="interaction">
    <interactant intactId="EBI-25887463">
        <id>Q7LGA3-3</id>
    </interactant>
    <interactant intactId="EBI-2432309">
        <id>Q92876</id>
        <label>KLK6</label>
    </interactant>
    <organismsDiffer>false</organismsDiffer>
    <experiments>3</experiments>
</comment>
<comment type="subcellular location">
    <subcellularLocation>
        <location evidence="4">Golgi apparatus membrane</location>
        <topology evidence="4">Single-pass type II membrane protein</topology>
    </subcellularLocation>
</comment>
<comment type="alternative products">
    <event type="alternative splicing"/>
    <isoform>
        <id>Q7LGA3-1</id>
        <name>1</name>
        <sequence type="displayed"/>
    </isoform>
    <isoform>
        <id>Q7LGA3-2</id>
        <name>2</name>
        <sequence type="described" ref="VSP_014062 VSP_014064"/>
    </isoform>
    <isoform>
        <id>Q7LGA3-3</id>
        <name>3</name>
        <sequence type="described" ref="VSP_014063"/>
    </isoform>
</comment>
<comment type="PTM">
    <text evidence="2">N-glycosylated.</text>
</comment>
<comment type="disease" evidence="6">
    <disease id="DI-06053">
        <name>Neurofacioskeletal syndrome with or without renal agenesis</name>
        <acronym>NFSRA</acronym>
        <description>An autosomal recessive syndrome characterized by developmental delay and/or intellectual disability, corpus callosum agenesis or hypoplasia, flexion contractures, brachydactyly of hands and feet with broad fingertips and toes, and dysmorphic features such as coarse face, upslanted palpebral fissures, broad nasal tip and wide mouth. Some patients manifest unilateral or bilateral renal agenesis.</description>
        <dbReference type="MIM" id="619194"/>
    </disease>
    <text>The disease is caused by variants affecting the gene represented in this entry.</text>
</comment>
<comment type="similarity">
    <text evidence="9">Belongs to the sulfotransferase 3 family.</text>
</comment>
<comment type="sequence caution" evidence="9">
    <conflict type="erroneous initiation">
        <sequence resource="EMBL-CDS" id="BAA32293"/>
    </conflict>
    <text>Extended N-terminus.</text>
</comment>
<accession>Q7LGA3</accession>
<accession>D3DT22</accession>
<accession>O75036</accession>
<accession>Q32NB5</accession>
<accession>Q8TAC5</accession>
<accession>Q9H441</accession>
<accession>Q9NUJ9</accession>
<name>HS2ST_HUMAN</name>
<proteinExistence type="evidence at protein level"/>
<gene>
    <name evidence="10" type="primary">HS2ST1</name>
    <name type="synonym">HS2ST</name>
    <name type="synonym">KIAA0448</name>
</gene>
<sequence>MGLLRIMMPPKLQLLAVVAFAVAMLFLENQIQKLEESRSKLERAIARHEVREIEQRHTMDGPRQDATLDEEEDMVIIYNRVPKTASTSFTNIAYDLCAKNKYHVLHINTTKNNPVMSLQDQVRFVKNITSWKEMKPGFYHGHVSYLDFAKFGVKKKPIYINVIRDPIERLVSYYYFLRFGDDYRPGLRRRKQGDKKTFDECVAEGGSDCAPEKLWLQIPFFCGHSSECWNVGSRWAMDQAKYNLINEYFLVGVTEELEDFIMLLEAALPRFFRGATELYRTGKKSHLRKTTEKKLPTKQTIAKLQQSDIWKMENEFYEFALEQFQFIRAHAVREKDGDLYILAQNFFYEKIYPKSN</sequence>
<protein>
    <recommendedName>
        <fullName evidence="9">Heparan sulfate 2-O-sulfotransferase 1</fullName>
        <ecNumber evidence="4">2.8.2.-</ecNumber>
    </recommendedName>
    <alternativeName>
        <fullName evidence="4">2-O-sulfotransferase</fullName>
        <shortName evidence="4">2-OST</shortName>
        <shortName evidence="3">2OST</shortName>
    </alternativeName>
    <alternativeName>
        <fullName evidence="4">HS 2-O-sulfotransferase</fullName>
    </alternativeName>
    <alternativeName>
        <fullName evidence="4">Heparan sulfate 2-sulfotransferase</fullName>
    </alternativeName>
</protein>
<keyword id="KW-0025">Alternative splicing</keyword>
<keyword id="KW-0175">Coiled coil</keyword>
<keyword id="KW-0225">Disease variant</keyword>
<keyword id="KW-1015">Disulfide bond</keyword>
<keyword id="KW-0325">Glycoprotein</keyword>
<keyword id="KW-0333">Golgi apparatus</keyword>
<keyword id="KW-0991">Intellectual disability</keyword>
<keyword id="KW-0472">Membrane</keyword>
<keyword id="KW-1267">Proteomics identification</keyword>
<keyword id="KW-1185">Reference proteome</keyword>
<keyword id="KW-0735">Signal-anchor</keyword>
<keyword id="KW-0808">Transferase</keyword>
<keyword id="KW-0812">Transmembrane</keyword>
<keyword id="KW-1133">Transmembrane helix</keyword>
<dbReference type="EC" id="2.8.2.-" evidence="4"/>
<dbReference type="EMBL" id="AB024568">
    <property type="protein sequence ID" value="BAA89250.1"/>
    <property type="molecule type" value="mRNA"/>
</dbReference>
<dbReference type="EMBL" id="AB007917">
    <property type="protein sequence ID" value="BAA32293.2"/>
    <property type="status" value="ALT_INIT"/>
    <property type="molecule type" value="mRNA"/>
</dbReference>
<dbReference type="EMBL" id="AK002179">
    <property type="protein sequence ID" value="BAA92125.1"/>
    <property type="molecule type" value="mRNA"/>
</dbReference>
<dbReference type="EMBL" id="AC093155">
    <property type="status" value="NOT_ANNOTATED_CDS"/>
    <property type="molecule type" value="Genomic_DNA"/>
</dbReference>
<dbReference type="EMBL" id="AL121989">
    <property type="status" value="NOT_ANNOTATED_CDS"/>
    <property type="molecule type" value="Genomic_DNA"/>
</dbReference>
<dbReference type="EMBL" id="AL139139">
    <property type="status" value="NOT_ANNOTATED_CDS"/>
    <property type="molecule type" value="Genomic_DNA"/>
</dbReference>
<dbReference type="EMBL" id="CH471097">
    <property type="protein sequence ID" value="EAW73171.1"/>
    <property type="molecule type" value="Genomic_DNA"/>
</dbReference>
<dbReference type="EMBL" id="CH471097">
    <property type="protein sequence ID" value="EAW73172.1"/>
    <property type="molecule type" value="Genomic_DNA"/>
</dbReference>
<dbReference type="EMBL" id="BC025384">
    <property type="protein sequence ID" value="AAH25384.1"/>
    <property type="molecule type" value="mRNA"/>
</dbReference>
<dbReference type="EMBL" id="BC025990">
    <property type="protein sequence ID" value="AAH25990.1"/>
    <property type="molecule type" value="mRNA"/>
</dbReference>
<dbReference type="EMBL" id="BC108735">
    <property type="protein sequence ID" value="AAI08736.1"/>
    <property type="molecule type" value="mRNA"/>
</dbReference>
<dbReference type="CCDS" id="CCDS44171.1">
    <molecule id="Q7LGA3-3"/>
</dbReference>
<dbReference type="CCDS" id="CCDS711.1">
    <molecule id="Q7LGA3-1"/>
</dbReference>
<dbReference type="RefSeq" id="NP_001127964.1">
    <molecule id="Q7LGA3-3"/>
    <property type="nucleotide sequence ID" value="NM_001134492.2"/>
</dbReference>
<dbReference type="RefSeq" id="NP_036394.1">
    <molecule id="Q7LGA3-1"/>
    <property type="nucleotide sequence ID" value="NM_012262.4"/>
</dbReference>
<dbReference type="SMR" id="Q7LGA3"/>
<dbReference type="BioGRID" id="115011">
    <property type="interactions" value="165"/>
</dbReference>
<dbReference type="FunCoup" id="Q7LGA3">
    <property type="interactions" value="2062"/>
</dbReference>
<dbReference type="IntAct" id="Q7LGA3">
    <property type="interactions" value="92"/>
</dbReference>
<dbReference type="MINT" id="Q7LGA3"/>
<dbReference type="STRING" id="9606.ENSP00000359581"/>
<dbReference type="GlyConnect" id="1308">
    <property type="glycosylation" value="3 N-Linked glycans (1 site)"/>
</dbReference>
<dbReference type="GlyCosmos" id="Q7LGA3">
    <property type="glycosylation" value="2 sites, 3 glycans"/>
</dbReference>
<dbReference type="GlyGen" id="Q7LGA3">
    <property type="glycosylation" value="3 sites, 32 N-linked glycans (2 sites), 1 O-linked glycan (1 site)"/>
</dbReference>
<dbReference type="iPTMnet" id="Q7LGA3"/>
<dbReference type="PhosphoSitePlus" id="Q7LGA3"/>
<dbReference type="SwissPalm" id="Q7LGA3"/>
<dbReference type="BioMuta" id="HS2ST1"/>
<dbReference type="DMDM" id="68052326"/>
<dbReference type="jPOST" id="Q7LGA3"/>
<dbReference type="MassIVE" id="Q7LGA3"/>
<dbReference type="PaxDb" id="9606-ENSP00000359581"/>
<dbReference type="PeptideAtlas" id="Q7LGA3"/>
<dbReference type="ProteomicsDB" id="68865">
    <molecule id="Q7LGA3-1"/>
</dbReference>
<dbReference type="ProteomicsDB" id="68866">
    <molecule id="Q7LGA3-2"/>
</dbReference>
<dbReference type="ProteomicsDB" id="68867">
    <molecule id="Q7LGA3-3"/>
</dbReference>
<dbReference type="Pumba" id="Q7LGA3"/>
<dbReference type="Antibodypedia" id="33591">
    <property type="antibodies" value="226 antibodies from 27 providers"/>
</dbReference>
<dbReference type="DNASU" id="9653"/>
<dbReference type="Ensembl" id="ENST00000370550.10">
    <molecule id="Q7LGA3-1"/>
    <property type="protein sequence ID" value="ENSP00000359581.4"/>
    <property type="gene ID" value="ENSG00000153936.18"/>
</dbReference>
<dbReference type="Ensembl" id="ENST00000370551.8">
    <molecule id="Q7LGA3-3"/>
    <property type="protein sequence ID" value="ENSP00000359582.3"/>
    <property type="gene ID" value="ENSG00000153936.18"/>
</dbReference>
<dbReference type="GeneID" id="9653"/>
<dbReference type="KEGG" id="hsa:9653"/>
<dbReference type="MANE-Select" id="ENST00000370550.10">
    <property type="protein sequence ID" value="ENSP00000359581.4"/>
    <property type="RefSeq nucleotide sequence ID" value="NM_012262.4"/>
    <property type="RefSeq protein sequence ID" value="NP_036394.1"/>
</dbReference>
<dbReference type="UCSC" id="uc001dmc.5">
    <molecule id="Q7LGA3-1"/>
    <property type="organism name" value="human"/>
</dbReference>
<dbReference type="AGR" id="HGNC:5193"/>
<dbReference type="CTD" id="9653"/>
<dbReference type="DisGeNET" id="9653"/>
<dbReference type="GeneCards" id="HS2ST1"/>
<dbReference type="HGNC" id="HGNC:5193">
    <property type="gene designation" value="HS2ST1"/>
</dbReference>
<dbReference type="HPA" id="ENSG00000153936">
    <property type="expression patterns" value="Low tissue specificity"/>
</dbReference>
<dbReference type="MalaCards" id="HS2ST1"/>
<dbReference type="MIM" id="604844">
    <property type="type" value="gene"/>
</dbReference>
<dbReference type="MIM" id="619194">
    <property type="type" value="phenotype"/>
</dbReference>
<dbReference type="neXtProt" id="NX_Q7LGA3"/>
<dbReference type="OpenTargets" id="ENSG00000153936"/>
<dbReference type="OpenTargets" id="ENSG00000267561"/>
<dbReference type="Orphanet" id="528084">
    <property type="disease" value="Non-specific syndromic intellectual disability"/>
</dbReference>
<dbReference type="PharmGKB" id="PA29466"/>
<dbReference type="VEuPathDB" id="HostDB:ENSG00000153936"/>
<dbReference type="eggNOG" id="KOG3922">
    <property type="taxonomic scope" value="Eukaryota"/>
</dbReference>
<dbReference type="GeneTree" id="ENSGT00530000063408"/>
<dbReference type="HOGENOM" id="CLU_045310_1_1_1"/>
<dbReference type="InParanoid" id="Q7LGA3"/>
<dbReference type="OMA" id="MALWRMM"/>
<dbReference type="OrthoDB" id="10019582at2759"/>
<dbReference type="PAN-GO" id="Q7LGA3">
    <property type="GO annotations" value="3 GO annotations based on evolutionary models"/>
</dbReference>
<dbReference type="PhylomeDB" id="Q7LGA3"/>
<dbReference type="TreeFam" id="TF315238"/>
<dbReference type="BioCyc" id="MetaCyc:ENSG00000153936-MONOMER"/>
<dbReference type="BRENDA" id="2.8.2.B6">
    <property type="organism ID" value="2681"/>
</dbReference>
<dbReference type="PathwayCommons" id="Q7LGA3"/>
<dbReference type="Reactome" id="R-HSA-2022928">
    <property type="pathway name" value="HS-GAG biosynthesis"/>
</dbReference>
<dbReference type="SignaLink" id="Q7LGA3"/>
<dbReference type="BioGRID-ORCS" id="9653">
    <property type="hits" value="22 hits in 1170 CRISPR screens"/>
</dbReference>
<dbReference type="ChiTaRS" id="HS2ST1">
    <property type="organism name" value="human"/>
</dbReference>
<dbReference type="GeneWiki" id="HS2ST1"/>
<dbReference type="GenomeRNAi" id="9653"/>
<dbReference type="Pharos" id="Q7LGA3">
    <property type="development level" value="Tbio"/>
</dbReference>
<dbReference type="PRO" id="PR:Q7LGA3"/>
<dbReference type="Proteomes" id="UP000005640">
    <property type="component" value="Chromosome 1"/>
</dbReference>
<dbReference type="RNAct" id="Q7LGA3">
    <property type="molecule type" value="protein"/>
</dbReference>
<dbReference type="Bgee" id="ENSG00000153936">
    <property type="expression patterns" value="Expressed in adrenal tissue and 194 other cell types or tissues"/>
</dbReference>
<dbReference type="ExpressionAtlas" id="Q7LGA3">
    <property type="expression patterns" value="baseline and differential"/>
</dbReference>
<dbReference type="GO" id="GO:0000139">
    <property type="term" value="C:Golgi membrane"/>
    <property type="evidence" value="ECO:0000304"/>
    <property type="project" value="Reactome"/>
</dbReference>
<dbReference type="GO" id="GO:0016020">
    <property type="term" value="C:membrane"/>
    <property type="evidence" value="ECO:0007005"/>
    <property type="project" value="UniProtKB"/>
</dbReference>
<dbReference type="GO" id="GO:0004394">
    <property type="term" value="F:heparan sulfate 2-sulfotransferase activity"/>
    <property type="evidence" value="ECO:0000250"/>
    <property type="project" value="UniProtKB"/>
</dbReference>
<dbReference type="GO" id="GO:0010467">
    <property type="term" value="P:gene expression"/>
    <property type="evidence" value="ECO:0007669"/>
    <property type="project" value="Ensembl"/>
</dbReference>
<dbReference type="GO" id="GO:0015012">
    <property type="term" value="P:heparan sulfate proteoglycan biosynthetic process"/>
    <property type="evidence" value="ECO:0007669"/>
    <property type="project" value="Ensembl"/>
</dbReference>
<dbReference type="GO" id="GO:0030202">
    <property type="term" value="P:heparin proteoglycan metabolic process"/>
    <property type="evidence" value="ECO:0007669"/>
    <property type="project" value="Ensembl"/>
</dbReference>
<dbReference type="GO" id="GO:0060676">
    <property type="term" value="P:ureteric bud formation"/>
    <property type="evidence" value="ECO:0007669"/>
    <property type="project" value="Ensembl"/>
</dbReference>
<dbReference type="FunFam" id="3.40.50.300:FF:000534">
    <property type="entry name" value="Heparan sulfate 2-O-sulfotransferase 1"/>
    <property type="match status" value="1"/>
</dbReference>
<dbReference type="Gene3D" id="3.40.50.300">
    <property type="entry name" value="P-loop containing nucleotide triphosphate hydrolases"/>
    <property type="match status" value="1"/>
</dbReference>
<dbReference type="InterPro" id="IPR007734">
    <property type="entry name" value="Heparan_SO4_2-O-STrfase"/>
</dbReference>
<dbReference type="InterPro" id="IPR027417">
    <property type="entry name" value="P-loop_NTPase"/>
</dbReference>
<dbReference type="InterPro" id="IPR005331">
    <property type="entry name" value="Sulfotransferase"/>
</dbReference>
<dbReference type="PANTHER" id="PTHR12129">
    <property type="entry name" value="HEPARAN SULFATE 2-O-SULFOTRANSFERASE"/>
    <property type="match status" value="1"/>
</dbReference>
<dbReference type="PANTHER" id="PTHR12129:SF17">
    <property type="entry name" value="HEPARAN SULFATE 2-O-SULFOTRANSFERASE 1"/>
    <property type="match status" value="1"/>
</dbReference>
<dbReference type="Pfam" id="PF03567">
    <property type="entry name" value="Sulfotransfer_2"/>
    <property type="match status" value="1"/>
</dbReference>
<dbReference type="SUPFAM" id="SSF52540">
    <property type="entry name" value="P-loop containing nucleoside triphosphate hydrolases"/>
    <property type="match status" value="1"/>
</dbReference>
<organism evidence="11">
    <name type="scientific">Homo sapiens</name>
    <name type="common">Human</name>
    <dbReference type="NCBI Taxonomy" id="9606"/>
    <lineage>
        <taxon>Eukaryota</taxon>
        <taxon>Metazoa</taxon>
        <taxon>Chordata</taxon>
        <taxon>Craniata</taxon>
        <taxon>Vertebrata</taxon>
        <taxon>Euteleostomi</taxon>
        <taxon>Mammalia</taxon>
        <taxon>Eutheria</taxon>
        <taxon>Euarchontoglires</taxon>
        <taxon>Primates</taxon>
        <taxon>Haplorrhini</taxon>
        <taxon>Catarrhini</taxon>
        <taxon>Hominidae</taxon>
        <taxon>Homo</taxon>
    </lineage>
</organism>
<evidence type="ECO:0000250" key="1">
    <source>
        <dbReference type="UniProtKB" id="A0A8C2LVE3"/>
    </source>
</evidence>
<evidence type="ECO:0000250" key="2">
    <source>
        <dbReference type="UniProtKB" id="O08889"/>
    </source>
</evidence>
<evidence type="ECO:0000250" key="3">
    <source>
        <dbReference type="UniProtKB" id="Q76KB1"/>
    </source>
</evidence>
<evidence type="ECO:0000250" key="4">
    <source>
        <dbReference type="UniProtKB" id="Q8R3H7"/>
    </source>
</evidence>
<evidence type="ECO:0000255" key="5"/>
<evidence type="ECO:0000269" key="6">
    <source>
    </source>
</evidence>
<evidence type="ECO:0000303" key="7">
    <source>
    </source>
</evidence>
<evidence type="ECO:0000303" key="8">
    <source>
    </source>
</evidence>
<evidence type="ECO:0000305" key="9"/>
<evidence type="ECO:0000312" key="10">
    <source>
        <dbReference type="HGNC" id="HGNC:5193"/>
    </source>
</evidence>
<evidence type="ECO:0000312" key="11">
    <source>
        <dbReference type="Proteomes" id="UP000005640"/>
    </source>
</evidence>